<proteinExistence type="evidence at protein level"/>
<dbReference type="EC" id="4.2.3.-" evidence="7"/>
<dbReference type="EC" id="2.5.1.-" evidence="7"/>
<dbReference type="EMBL" id="CH476597">
    <property type="protein sequence ID" value="EAU36842.1"/>
    <property type="molecule type" value="Genomic_DNA"/>
</dbReference>
<dbReference type="RefSeq" id="XP_001212746.1">
    <property type="nucleotide sequence ID" value="XM_001212746.1"/>
</dbReference>
<dbReference type="SMR" id="Q0CRW6"/>
<dbReference type="STRING" id="341663.Q0CRW6"/>
<dbReference type="EnsemblFungi" id="EAU36842">
    <property type="protein sequence ID" value="EAU36842"/>
    <property type="gene ID" value="ATEG_03568"/>
</dbReference>
<dbReference type="GeneID" id="4317926"/>
<dbReference type="VEuPathDB" id="FungiDB:ATEG_03568"/>
<dbReference type="eggNOG" id="KOG0777">
    <property type="taxonomic scope" value="Eukaryota"/>
</dbReference>
<dbReference type="HOGENOM" id="CLU_014015_10_0_1"/>
<dbReference type="OMA" id="PATHIFY"/>
<dbReference type="OrthoDB" id="6921389at2759"/>
<dbReference type="UniPathway" id="UPA00213"/>
<dbReference type="Proteomes" id="UP000007963">
    <property type="component" value="Unassembled WGS sequence"/>
</dbReference>
<dbReference type="GO" id="GO:0004311">
    <property type="term" value="F:geranylgeranyl diphosphate synthase activity"/>
    <property type="evidence" value="ECO:0007669"/>
    <property type="project" value="UniProtKB-EC"/>
</dbReference>
<dbReference type="GO" id="GO:0016829">
    <property type="term" value="F:lyase activity"/>
    <property type="evidence" value="ECO:0007669"/>
    <property type="project" value="UniProtKB-KW"/>
</dbReference>
<dbReference type="GO" id="GO:0046872">
    <property type="term" value="F:metal ion binding"/>
    <property type="evidence" value="ECO:0007669"/>
    <property type="project" value="UniProtKB-KW"/>
</dbReference>
<dbReference type="GO" id="GO:0046165">
    <property type="term" value="P:alcohol biosynthetic process"/>
    <property type="evidence" value="ECO:0007669"/>
    <property type="project" value="UniProtKB-ARBA"/>
</dbReference>
<dbReference type="GO" id="GO:0043386">
    <property type="term" value="P:mycotoxin biosynthetic process"/>
    <property type="evidence" value="ECO:0007669"/>
    <property type="project" value="UniProtKB-ARBA"/>
</dbReference>
<dbReference type="GO" id="GO:0016114">
    <property type="term" value="P:terpenoid biosynthetic process"/>
    <property type="evidence" value="ECO:0007669"/>
    <property type="project" value="UniProtKB-UniPathway"/>
</dbReference>
<dbReference type="CDD" id="cd00685">
    <property type="entry name" value="Trans_IPPS_HT"/>
    <property type="match status" value="1"/>
</dbReference>
<dbReference type="Gene3D" id="1.10.600.10">
    <property type="entry name" value="Farnesyl Diphosphate Synthase"/>
    <property type="match status" value="2"/>
</dbReference>
<dbReference type="InterPro" id="IPR008949">
    <property type="entry name" value="Isoprenoid_synthase_dom_sf"/>
</dbReference>
<dbReference type="InterPro" id="IPR000092">
    <property type="entry name" value="Polyprenyl_synt"/>
</dbReference>
<dbReference type="InterPro" id="IPR033749">
    <property type="entry name" value="Polyprenyl_synt_CS"/>
</dbReference>
<dbReference type="PANTHER" id="PTHR12001">
    <property type="entry name" value="GERANYLGERANYL PYROPHOSPHATE SYNTHASE"/>
    <property type="match status" value="1"/>
</dbReference>
<dbReference type="PANTHER" id="PTHR12001:SF44">
    <property type="entry name" value="GERANYLGERANYL PYROPHOSPHATE SYNTHASE"/>
    <property type="match status" value="1"/>
</dbReference>
<dbReference type="Pfam" id="PF00348">
    <property type="entry name" value="polyprenyl_synt"/>
    <property type="match status" value="1"/>
</dbReference>
<dbReference type="Pfam" id="PF19086">
    <property type="entry name" value="Terpene_syn_C_2"/>
    <property type="match status" value="1"/>
</dbReference>
<dbReference type="SFLD" id="SFLDS00005">
    <property type="entry name" value="Isoprenoid_Synthase_Type_I"/>
    <property type="match status" value="1"/>
</dbReference>
<dbReference type="SUPFAM" id="SSF48576">
    <property type="entry name" value="Terpenoid synthases"/>
    <property type="match status" value="2"/>
</dbReference>
<dbReference type="PROSITE" id="PS00723">
    <property type="entry name" value="POLYPRENYL_SYNTHASE_1"/>
    <property type="match status" value="1"/>
</dbReference>
<reference key="1">
    <citation type="submission" date="2005-09" db="EMBL/GenBank/DDBJ databases">
        <title>Annotation of the Aspergillus terreus NIH2624 genome.</title>
        <authorList>
            <person name="Birren B.W."/>
            <person name="Lander E.S."/>
            <person name="Galagan J.E."/>
            <person name="Nusbaum C."/>
            <person name="Devon K."/>
            <person name="Henn M."/>
            <person name="Ma L.-J."/>
            <person name="Jaffe D.B."/>
            <person name="Butler J."/>
            <person name="Alvarez P."/>
            <person name="Gnerre S."/>
            <person name="Grabherr M."/>
            <person name="Kleber M."/>
            <person name="Mauceli E.W."/>
            <person name="Brockman W."/>
            <person name="Rounsley S."/>
            <person name="Young S.K."/>
            <person name="LaButti K."/>
            <person name="Pushparaj V."/>
            <person name="DeCaprio D."/>
            <person name="Crawford M."/>
            <person name="Koehrsen M."/>
            <person name="Engels R."/>
            <person name="Montgomery P."/>
            <person name="Pearson M."/>
            <person name="Howarth C."/>
            <person name="Larson L."/>
            <person name="Luoma S."/>
            <person name="White J."/>
            <person name="Alvarado L."/>
            <person name="Kodira C.D."/>
            <person name="Zeng Q."/>
            <person name="Oleary S."/>
            <person name="Yandava C."/>
            <person name="Denning D.W."/>
            <person name="Nierman W.C."/>
            <person name="Milne T."/>
            <person name="Madden K."/>
        </authorList>
    </citation>
    <scope>NUCLEOTIDE SEQUENCE [LARGE SCALE GENOMIC DNA]</scope>
    <source>
        <strain>NIH 2624 / FGSC A1156</strain>
    </source>
</reference>
<reference key="2">
    <citation type="journal article" date="2017" name="Nat. Chem. Biol.">
        <title>A scalable platform to identify fungal secondary metabolites and their gene clusters.</title>
        <authorList>
            <person name="Clevenger K.D."/>
            <person name="Bok J.W."/>
            <person name="Ye R."/>
            <person name="Miley G.P."/>
            <person name="Verdan M.H."/>
            <person name="Velk T."/>
            <person name="Chen C."/>
            <person name="Yang K."/>
            <person name="Robey M.T."/>
            <person name="Gao P."/>
            <person name="Lamprecht M."/>
            <person name="Thomas P.M."/>
            <person name="Islam M.N."/>
            <person name="Palmer J.M."/>
            <person name="Wu C.C."/>
            <person name="Keller N.P."/>
            <person name="Kelleher N.L."/>
        </authorList>
    </citation>
    <scope>FUNCTION</scope>
    <scope>DISRUPTION PHENOTYPE</scope>
    <scope>PATHWAY</scope>
</reference>
<reference key="3">
    <citation type="journal article" date="2021" name="Org. Lett.">
        <title>Genome-based discovery of enantiomeric pentacyclic sesterterpenes catalyzed by fungal bifunctional terpene synthases.</title>
        <authorList>
            <person name="Jiang L."/>
            <person name="Zhang X."/>
            <person name="Sato Y."/>
            <person name="Zhu G."/>
            <person name="Minami A."/>
            <person name="Zhang W."/>
            <person name="Ozaki T."/>
            <person name="Zhu B."/>
            <person name="Wang Z."/>
            <person name="Wang X."/>
            <person name="Lv K."/>
            <person name="Zhang J."/>
            <person name="Wang Y."/>
            <person name="Gao S."/>
            <person name="Liu C."/>
            <person name="Hsiang T."/>
            <person name="Zhang L."/>
            <person name="Oikawa H."/>
            <person name="Liu X."/>
        </authorList>
    </citation>
    <scope>FUNCTION</scope>
    <scope>CATALYTIC ACTIVITY</scope>
    <scope>PATHWAY</scope>
</reference>
<feature type="chain" id="PRO_0000450607" description="Preaspterpenacid I synthase sttA">
    <location>
        <begin position="1"/>
        <end position="773"/>
    </location>
</feature>
<feature type="region of interest" description="Sesterterpenoid synthase" evidence="2">
    <location>
        <begin position="4"/>
        <end position="359"/>
    </location>
</feature>
<feature type="region of interest" description="Substrate" evidence="1">
    <location>
        <begin position="211"/>
        <end position="214"/>
    </location>
</feature>
<feature type="region of interest" description="Substrate" evidence="1">
    <location>
        <begin position="259"/>
        <end position="263"/>
    </location>
</feature>
<feature type="region of interest" description="Substrate" evidence="1">
    <location>
        <begin position="350"/>
        <end position="351"/>
    </location>
</feature>
<feature type="region of interest" description="Geranylfarnesyl diphosphate synthase" evidence="2">
    <location>
        <begin position="360"/>
        <end position="769"/>
    </location>
</feature>
<feature type="region of interest" description="Disordered" evidence="5">
    <location>
        <begin position="423"/>
        <end position="447"/>
    </location>
</feature>
<feature type="compositionally biased region" description="Polar residues" evidence="5">
    <location>
        <begin position="431"/>
        <end position="447"/>
    </location>
</feature>
<feature type="binding site" evidence="4">
    <location>
        <position position="105"/>
    </location>
    <ligand>
        <name>Mg(2+)</name>
        <dbReference type="ChEBI" id="CHEBI:18420"/>
        <label>1</label>
    </ligand>
</feature>
<feature type="binding site" evidence="4">
    <location>
        <position position="105"/>
    </location>
    <ligand>
        <name>Mg(2+)</name>
        <dbReference type="ChEBI" id="CHEBI:18420"/>
        <label>2</label>
    </ligand>
</feature>
<feature type="binding site" evidence="1">
    <location>
        <position position="105"/>
    </location>
    <ligand>
        <name>substrate</name>
    </ligand>
</feature>
<feature type="binding site" evidence="1">
    <location>
        <position position="255"/>
    </location>
    <ligand>
        <name>substrate</name>
    </ligand>
</feature>
<feature type="binding site" evidence="3">
    <location>
        <position position="493"/>
    </location>
    <ligand>
        <name>isopentenyl diphosphate</name>
        <dbReference type="ChEBI" id="CHEBI:128769"/>
    </ligand>
</feature>
<feature type="binding site" evidence="3">
    <location>
        <position position="496"/>
    </location>
    <ligand>
        <name>isopentenyl diphosphate</name>
        <dbReference type="ChEBI" id="CHEBI:128769"/>
    </ligand>
</feature>
<feature type="binding site" evidence="3">
    <location>
        <position position="525"/>
    </location>
    <ligand>
        <name>isopentenyl diphosphate</name>
        <dbReference type="ChEBI" id="CHEBI:128769"/>
    </ligand>
</feature>
<feature type="binding site" evidence="3">
    <location>
        <position position="532"/>
    </location>
    <ligand>
        <name>Mg(2+)</name>
        <dbReference type="ChEBI" id="CHEBI:18420"/>
        <label>3</label>
    </ligand>
</feature>
<feature type="binding site" evidence="3">
    <location>
        <position position="532"/>
    </location>
    <ligand>
        <name>Mg(2+)</name>
        <dbReference type="ChEBI" id="CHEBI:18420"/>
        <label>4</label>
    </ligand>
</feature>
<feature type="binding site" evidence="3">
    <location>
        <position position="536"/>
    </location>
    <ligand>
        <name>Mg(2+)</name>
        <dbReference type="ChEBI" id="CHEBI:18420"/>
        <label>3</label>
    </ligand>
</feature>
<feature type="binding site" evidence="3">
    <location>
        <position position="536"/>
    </location>
    <ligand>
        <name>Mg(2+)</name>
        <dbReference type="ChEBI" id="CHEBI:18420"/>
        <label>4</label>
    </ligand>
</feature>
<feature type="binding site" evidence="3">
    <location>
        <position position="541"/>
    </location>
    <ligand>
        <name>dimethylallyl diphosphate</name>
        <dbReference type="ChEBI" id="CHEBI:57623"/>
    </ligand>
</feature>
<feature type="binding site" evidence="3">
    <location>
        <position position="542"/>
    </location>
    <ligand>
        <name>isopentenyl diphosphate</name>
        <dbReference type="ChEBI" id="CHEBI:128769"/>
    </ligand>
</feature>
<feature type="binding site" evidence="3">
    <location>
        <position position="614"/>
    </location>
    <ligand>
        <name>dimethylallyl diphosphate</name>
        <dbReference type="ChEBI" id="CHEBI:57623"/>
    </ligand>
</feature>
<feature type="binding site" evidence="3">
    <location>
        <position position="615"/>
    </location>
    <ligand>
        <name>dimethylallyl diphosphate</name>
        <dbReference type="ChEBI" id="CHEBI:57623"/>
    </ligand>
</feature>
<feature type="binding site" evidence="3">
    <location>
        <position position="652"/>
    </location>
    <ligand>
        <name>dimethylallyl diphosphate</name>
        <dbReference type="ChEBI" id="CHEBI:57623"/>
    </ligand>
</feature>
<feature type="binding site" evidence="3">
    <location>
        <position position="659"/>
    </location>
    <ligand>
        <name>dimethylallyl diphosphate</name>
        <dbReference type="ChEBI" id="CHEBI:57623"/>
    </ligand>
</feature>
<feature type="binding site" evidence="3">
    <location>
        <position position="669"/>
    </location>
    <ligand>
        <name>dimethylallyl diphosphate</name>
        <dbReference type="ChEBI" id="CHEBI:57623"/>
    </ligand>
</feature>
<evidence type="ECO:0000250" key="1">
    <source>
        <dbReference type="UniProtKB" id="A2PZA5"/>
    </source>
</evidence>
<evidence type="ECO:0000250" key="2">
    <source>
        <dbReference type="UniProtKB" id="C9K2Q3"/>
    </source>
</evidence>
<evidence type="ECO:0000250" key="3">
    <source>
        <dbReference type="UniProtKB" id="Q12051"/>
    </source>
</evidence>
<evidence type="ECO:0000250" key="4">
    <source>
        <dbReference type="UniProtKB" id="Q40577"/>
    </source>
</evidence>
<evidence type="ECO:0000256" key="5">
    <source>
        <dbReference type="SAM" id="MobiDB-lite"/>
    </source>
</evidence>
<evidence type="ECO:0000269" key="6">
    <source>
    </source>
</evidence>
<evidence type="ECO:0000269" key="7">
    <source>
    </source>
</evidence>
<evidence type="ECO:0000303" key="8">
    <source>
    </source>
</evidence>
<evidence type="ECO:0000303" key="9">
    <source>
    </source>
</evidence>
<evidence type="ECO:0000305" key="10"/>
<evidence type="ECO:0000305" key="11">
    <source>
    </source>
</evidence>
<gene>
    <name evidence="8" type="primary">sttA</name>
    <name type="ORF">ATEG_03568</name>
</gene>
<protein>
    <recommendedName>
        <fullName evidence="9">Preaspterpenacid I synthase sttA</fullName>
    </recommendedName>
    <domain>
        <recommendedName>
            <fullName evidence="9">Sesterterpenoid synthase</fullName>
            <ecNumber evidence="7">4.2.3.-</ecNumber>
        </recommendedName>
    </domain>
    <domain>
        <recommendedName>
            <fullName evidence="9">Geranylfarnesyl diphosphate synthase</fullName>
            <shortName evidence="9">GFDP synthase</shortName>
            <ecNumber evidence="7">2.5.1.-</ecNumber>
        </recommendedName>
        <alternativeName>
            <fullName evidence="9">Aspterpenacid biosynthesis cluster protein sttA</fullName>
        </alternativeName>
        <alternativeName>
            <fullName evidence="8">Ophiobolin family sesterterpenoid biosynthesis cluster protein A</fullName>
        </alternativeName>
    </domain>
</protein>
<sequence>MDTISDVMKHCVPINYDDYDPLPADHFSTYPVFCSKATAEAIEASAEFTRKWKRACEVDGLHQDKLNFQACTTHLGHYNQWAYPDCLPERVSLNAVLSDCAFFWDGMSPVTGRSTNVMITSPVDVSDSISAEKMNELTQDFGIAMLSELQSGRRIEPRFEINKMAVQVIRDFIAVDPFTGIGHLKEWKGHLDAQEKSTHNNMSWEKYVEHRVNESGGNWGISVGCWTNDIRISDEEKESVKYLTQLACAGGILGNDYYSFPKEFDEHHRSGTLDRLQNGVALLMREYGYTEEEAKEIIKKEVIIREKKWMDGFDAWSRQAGPETGEIRRYLVMTMALMSGSMFWMSHAGRYHRTDLATTAEDRATLIGKSRGALRVLAGYPPPKNLEGIVREPLASAVQDDNGHVQHKDAVADSSVRNGVHHAFKKRNSRNGKQNGTEGSKSTFTNGNYVQPAKLQQHGTSINSMAIYTAPFQEAAGDICDAPYSYIDSLPSKKNRNKLLDLLNDWLQVPPSSLKRIKNIVHMLHNSSLMLDDIEDASALRRGQPATHTFYGISQTINSANYVYVHAVHEVTRLYNPDADELRNLHRGQSLDLYWRHHARCPSMEEYIVMVDNKTGGLFRLMLRLMTAESSISRPLDTALCRLLTLTGRYYQIRDDYLNLASADYESKKGFCEDFDEGKFSLPLIHLLSHTRYPDRITSALFNRKPGTNLPYEMKRYILAEMEEVQTLAYSQDVLKYLHEELMHALDETENRLGANDGIRMMLLGMGPKLLLC</sequence>
<comment type="function">
    <text evidence="6 7 11">Sesterterpenoid synthase; part of the gene cluster that mediates the biosynthesis of aspterpenacids (PubMed:28604695, PubMed:34085529). Performs both prenyl transferase and terpene cyclase activity, converting isopentenyl diphosphate and dimethylallyl diphosphate into geranylfarnesyl diphosphate (GFPP) and then converting GFPP into preaspterpenacid I (PubMed:34085529). C22-oxidative modification of preaspterpenacid I by the cytochrome P450 monooxygenase sttB then leads to preaspterpenacid II. It has still to be determined how preaspterpenacid II is further modified to produce aspterpenacids (PubMed:34085529).</text>
</comment>
<comment type="catalytic activity">
    <reaction evidence="7">
        <text>4 isopentenyl diphosphate + dimethylallyl diphosphate = (2E,6E,10E,14E)-geranylfarnesyl diphosphate + 4 diphosphate</text>
        <dbReference type="Rhea" id="RHEA:66860"/>
        <dbReference type="ChEBI" id="CHEBI:33019"/>
        <dbReference type="ChEBI" id="CHEBI:57623"/>
        <dbReference type="ChEBI" id="CHEBI:57907"/>
        <dbReference type="ChEBI" id="CHEBI:128769"/>
    </reaction>
    <physiologicalReaction direction="left-to-right" evidence="7">
        <dbReference type="Rhea" id="RHEA:66861"/>
    </physiologicalReaction>
</comment>
<comment type="catalytic activity">
    <reaction evidence="7">
        <text>(2E,6E,10E,14E)-geranylfarnesyl diphosphate + H2O = preaspterpenacid acid I + diphosphate</text>
        <dbReference type="Rhea" id="RHEA:71995"/>
        <dbReference type="ChEBI" id="CHEBI:15377"/>
        <dbReference type="ChEBI" id="CHEBI:33019"/>
        <dbReference type="ChEBI" id="CHEBI:57907"/>
        <dbReference type="ChEBI" id="CHEBI:191389"/>
    </reaction>
    <physiologicalReaction direction="left-to-right" evidence="7">
        <dbReference type="Rhea" id="RHEA:71996"/>
    </physiologicalReaction>
</comment>
<comment type="pathway">
    <text evidence="6 7">Secondary metabolite biosynthesis; terpenoid biosynthesis.</text>
</comment>
<comment type="disruption phenotype">
    <text evidence="6">Abolishes the production of sesterterpenoid.</text>
</comment>
<comment type="similarity">
    <text evidence="10">In the N-terminal section; belongs to the terpene synthase family.</text>
</comment>
<comment type="similarity">
    <text evidence="10">In the C-terminal section; belongs to the FPP/GGPP synthase family.</text>
</comment>
<accession>Q0CRW6</accession>
<name>STTA_ASPTN</name>
<organism>
    <name type="scientific">Aspergillus terreus (strain NIH 2624 / FGSC A1156)</name>
    <dbReference type="NCBI Taxonomy" id="341663"/>
    <lineage>
        <taxon>Eukaryota</taxon>
        <taxon>Fungi</taxon>
        <taxon>Dikarya</taxon>
        <taxon>Ascomycota</taxon>
        <taxon>Pezizomycotina</taxon>
        <taxon>Eurotiomycetes</taxon>
        <taxon>Eurotiomycetidae</taxon>
        <taxon>Eurotiales</taxon>
        <taxon>Aspergillaceae</taxon>
        <taxon>Aspergillus</taxon>
        <taxon>Aspergillus subgen. Circumdati</taxon>
    </lineage>
</organism>
<keyword id="KW-0414">Isoprene biosynthesis</keyword>
<keyword id="KW-0456">Lyase</keyword>
<keyword id="KW-0460">Magnesium</keyword>
<keyword id="KW-0479">Metal-binding</keyword>
<keyword id="KW-0511">Multifunctional enzyme</keyword>
<keyword id="KW-1185">Reference proteome</keyword>
<keyword id="KW-0808">Transferase</keyword>